<gene>
    <name evidence="4" type="primary">TAB2</name>
    <name evidence="6" type="ORF">ZEAMMB73_Zm00001d017179</name>
</gene>
<evidence type="ECO:0000255" key="1"/>
<evidence type="ECO:0000256" key="2">
    <source>
        <dbReference type="SAM" id="MobiDB-lite"/>
    </source>
</evidence>
<evidence type="ECO:0000269" key="3">
    <source>
    </source>
</evidence>
<evidence type="ECO:0000303" key="4">
    <source>
    </source>
</evidence>
<evidence type="ECO:0000305" key="5"/>
<evidence type="ECO:0000312" key="6">
    <source>
        <dbReference type="EMBL" id="AQK72533.1"/>
    </source>
</evidence>
<reference key="1">
    <citation type="journal article" date="2009" name="Science">
        <title>The B73 maize genome: complexity, diversity, and dynamics.</title>
        <authorList>
            <person name="Schnable P.S."/>
            <person name="Ware D."/>
            <person name="Fulton R.S."/>
            <person name="Stein J.C."/>
            <person name="Wei F."/>
            <person name="Pasternak S."/>
            <person name="Liang C."/>
            <person name="Zhang J."/>
            <person name="Fulton L."/>
            <person name="Graves T.A."/>
            <person name="Minx P."/>
            <person name="Reily A.D."/>
            <person name="Courtney L."/>
            <person name="Kruchowski S.S."/>
            <person name="Tomlinson C."/>
            <person name="Strong C."/>
            <person name="Delehaunty K."/>
            <person name="Fronick C."/>
            <person name="Courtney B."/>
            <person name="Rock S.M."/>
            <person name="Belter E."/>
            <person name="Du F."/>
            <person name="Kim K."/>
            <person name="Abbott R.M."/>
            <person name="Cotton M."/>
            <person name="Levy A."/>
            <person name="Marchetto P."/>
            <person name="Ochoa K."/>
            <person name="Jackson S.M."/>
            <person name="Gillam B."/>
            <person name="Chen W."/>
            <person name="Yan L."/>
            <person name="Higginbotham J."/>
            <person name="Cardenas M."/>
            <person name="Waligorski J."/>
            <person name="Applebaum E."/>
            <person name="Phelps L."/>
            <person name="Falcone J."/>
            <person name="Kanchi K."/>
            <person name="Thane T."/>
            <person name="Scimone A."/>
            <person name="Thane N."/>
            <person name="Henke J."/>
            <person name="Wang T."/>
            <person name="Ruppert J."/>
            <person name="Shah N."/>
            <person name="Rotter K."/>
            <person name="Hodges J."/>
            <person name="Ingenthron E."/>
            <person name="Cordes M."/>
            <person name="Kohlberg S."/>
            <person name="Sgro J."/>
            <person name="Delgado B."/>
            <person name="Mead K."/>
            <person name="Chinwalla A."/>
            <person name="Leonard S."/>
            <person name="Crouse K."/>
            <person name="Collura K."/>
            <person name="Kudrna D."/>
            <person name="Currie J."/>
            <person name="He R."/>
            <person name="Angelova A."/>
            <person name="Rajasekar S."/>
            <person name="Mueller T."/>
            <person name="Lomeli R."/>
            <person name="Scara G."/>
            <person name="Ko A."/>
            <person name="Delaney K."/>
            <person name="Wissotski M."/>
            <person name="Lopez G."/>
            <person name="Campos D."/>
            <person name="Braidotti M."/>
            <person name="Ashley E."/>
            <person name="Golser W."/>
            <person name="Kim H."/>
            <person name="Lee S."/>
            <person name="Lin J."/>
            <person name="Dujmic Z."/>
            <person name="Kim W."/>
            <person name="Talag J."/>
            <person name="Zuccolo A."/>
            <person name="Fan C."/>
            <person name="Sebastian A."/>
            <person name="Kramer M."/>
            <person name="Spiegel L."/>
            <person name="Nascimento L."/>
            <person name="Zutavern T."/>
            <person name="Miller B."/>
            <person name="Ambroise C."/>
            <person name="Muller S."/>
            <person name="Spooner W."/>
            <person name="Narechania A."/>
            <person name="Ren L."/>
            <person name="Wei S."/>
            <person name="Kumari S."/>
            <person name="Faga B."/>
            <person name="Levy M.J."/>
            <person name="McMahan L."/>
            <person name="Van Buren P."/>
            <person name="Vaughn M.W."/>
            <person name="Ying K."/>
            <person name="Yeh C.-T."/>
            <person name="Emrich S.J."/>
            <person name="Jia Y."/>
            <person name="Kalyanaraman A."/>
            <person name="Hsia A.-P."/>
            <person name="Barbazuk W.B."/>
            <person name="Baucom R.S."/>
            <person name="Brutnell T.P."/>
            <person name="Carpita N.C."/>
            <person name="Chaparro C."/>
            <person name="Chia J.-M."/>
            <person name="Deragon J.-M."/>
            <person name="Estill J.C."/>
            <person name="Fu Y."/>
            <person name="Jeddeloh J.A."/>
            <person name="Han Y."/>
            <person name="Lee H."/>
            <person name="Li P."/>
            <person name="Lisch D.R."/>
            <person name="Liu S."/>
            <person name="Liu Z."/>
            <person name="Nagel D.H."/>
            <person name="McCann M.C."/>
            <person name="SanMiguel P."/>
            <person name="Myers A.M."/>
            <person name="Nettleton D."/>
            <person name="Nguyen J."/>
            <person name="Penning B.W."/>
            <person name="Ponnala L."/>
            <person name="Schneider K.L."/>
            <person name="Schwartz D.C."/>
            <person name="Sharma A."/>
            <person name="Soderlund C."/>
            <person name="Springer N.M."/>
            <person name="Sun Q."/>
            <person name="Wang H."/>
            <person name="Waterman M."/>
            <person name="Westerman R."/>
            <person name="Wolfgruber T.K."/>
            <person name="Yang L."/>
            <person name="Yu Y."/>
            <person name="Zhang L."/>
            <person name="Zhou S."/>
            <person name="Zhu Q."/>
            <person name="Bennetzen J.L."/>
            <person name="Dawe R.K."/>
            <person name="Jiang J."/>
            <person name="Jiang N."/>
            <person name="Presting G.G."/>
            <person name="Wessler S.R."/>
            <person name="Aluru S."/>
            <person name="Martienssen R.A."/>
            <person name="Clifton S.W."/>
            <person name="McCombie W.R."/>
            <person name="Wing R.A."/>
            <person name="Wilson R.K."/>
        </authorList>
    </citation>
    <scope>NUCLEOTIDE SEQUENCE [LARGE SCALE GENOMIC DNA]</scope>
    <source>
        <strain>cv. B73</strain>
    </source>
</reference>
<reference key="2">
    <citation type="journal article" date="2009" name="Plant Mol. Biol.">
        <title>Insights into corn genes derived from large-scale cDNA sequencing.</title>
        <authorList>
            <person name="Alexandrov N.N."/>
            <person name="Brover V.V."/>
            <person name="Freidin S."/>
            <person name="Troukhan M.E."/>
            <person name="Tatarinova T.V."/>
            <person name="Zhang H."/>
            <person name="Swaller T.J."/>
            <person name="Lu Y.-P."/>
            <person name="Bouck J."/>
            <person name="Flavell R.B."/>
            <person name="Feldmann K.A."/>
        </authorList>
    </citation>
    <scope>NUCLEOTIDE SEQUENCE [LARGE SCALE MRNA]</scope>
</reference>
<reference key="3">
    <citation type="journal article" date="2009" name="PLoS Genet.">
        <title>Sequencing, mapping, and analysis of 27,455 maize full-length cDNAs.</title>
        <authorList>
            <person name="Soderlund C."/>
            <person name="Descour A."/>
            <person name="Kudrna D."/>
            <person name="Bomhoff M."/>
            <person name="Boyd L."/>
            <person name="Currie J."/>
            <person name="Angelova A."/>
            <person name="Collura K."/>
            <person name="Wissotski M."/>
            <person name="Ashley E."/>
            <person name="Morrow D."/>
            <person name="Fernandes J."/>
            <person name="Walbot V."/>
            <person name="Yu Y."/>
        </authorList>
    </citation>
    <scope>NUCLEOTIDE SEQUENCE [LARGE SCALE MRNA]</scope>
    <source>
        <strain>cv. B73</strain>
    </source>
</reference>
<reference key="4">
    <citation type="journal article" date="2015" name="Biochim. Biophys. Acta">
        <title>Large-scale genetic analysis of chloroplast biogenesis in maize.</title>
        <authorList>
            <person name="Belcher S."/>
            <person name="Williams-Carrier R."/>
            <person name="Stiffler N."/>
            <person name="Barkan A."/>
        </authorList>
    </citation>
    <scope>FUNCTION</scope>
    <scope>DISRUPTION PHENOTYPE</scope>
</reference>
<keyword id="KW-0150">Chloroplast</keyword>
<keyword id="KW-0934">Plastid</keyword>
<keyword id="KW-1185">Reference proteome</keyword>
<keyword id="KW-0809">Transit peptide</keyword>
<name>ATAB2_MAIZE</name>
<accession>B4FTR7</accession>
<organism>
    <name type="scientific">Zea mays</name>
    <name type="common">Maize</name>
    <dbReference type="NCBI Taxonomy" id="4577"/>
    <lineage>
        <taxon>Eukaryota</taxon>
        <taxon>Viridiplantae</taxon>
        <taxon>Streptophyta</taxon>
        <taxon>Embryophyta</taxon>
        <taxon>Tracheophyta</taxon>
        <taxon>Spermatophyta</taxon>
        <taxon>Magnoliopsida</taxon>
        <taxon>Liliopsida</taxon>
        <taxon>Poales</taxon>
        <taxon>Poaceae</taxon>
        <taxon>PACMAD clade</taxon>
        <taxon>Panicoideae</taxon>
        <taxon>Andropogonodae</taxon>
        <taxon>Andropogoneae</taxon>
        <taxon>Tripsacinae</taxon>
        <taxon>Zea</taxon>
    </lineage>
</organism>
<comment type="function">
    <text evidence="3">Nuclear genome-encoded factor involved in the biogenesis of photosystem I (PSI). Required for the accumulation of PSI during plant development. Does not seem to be required for the translation of mRNAs of the PSI subunits.</text>
</comment>
<comment type="subcellular location">
    <subcellularLocation>
        <location evidence="1">Plastid</location>
        <location evidence="1">Chloroplast</location>
    </subcellularLocation>
</comment>
<comment type="disruption phenotype">
    <text evidence="3">Pale green leaf phenotype.</text>
</comment>
<dbReference type="EMBL" id="CM000781">
    <property type="protein sequence ID" value="AQK72533.1"/>
    <property type="molecule type" value="Genomic_DNA"/>
</dbReference>
<dbReference type="EMBL" id="BT040505">
    <property type="protein sequence ID" value="ACF85510.1"/>
    <property type="molecule type" value="mRNA"/>
</dbReference>
<dbReference type="EMBL" id="EU968538">
    <property type="protein sequence ID" value="ACG40656.1"/>
    <property type="molecule type" value="mRNA"/>
</dbReference>
<dbReference type="RefSeq" id="NP_001150851.1">
    <property type="nucleotide sequence ID" value="NM_001157379.2"/>
</dbReference>
<dbReference type="FunCoup" id="B4FTR7">
    <property type="interactions" value="1385"/>
</dbReference>
<dbReference type="IntAct" id="B4FTR7">
    <property type="interactions" value="1"/>
</dbReference>
<dbReference type="STRING" id="4577.B4FTR7"/>
<dbReference type="PaxDb" id="4577-GRMZM2G081955_P01"/>
<dbReference type="EnsemblPlants" id="Zm00001eb246820_T001">
    <property type="protein sequence ID" value="Zm00001eb246820_P001"/>
    <property type="gene ID" value="Zm00001eb246820"/>
</dbReference>
<dbReference type="GeneID" id="100284484"/>
<dbReference type="Gramene" id="Zm00001eb246820_T001">
    <property type="protein sequence ID" value="Zm00001eb246820_P001"/>
    <property type="gene ID" value="Zm00001eb246820"/>
</dbReference>
<dbReference type="KEGG" id="zma:100284484"/>
<dbReference type="eggNOG" id="ENOG502QVJR">
    <property type="taxonomic scope" value="Eukaryota"/>
</dbReference>
<dbReference type="HOGENOM" id="CLU_058545_1_0_1"/>
<dbReference type="InParanoid" id="B4FTR7"/>
<dbReference type="OMA" id="FFRRQMN"/>
<dbReference type="OrthoDB" id="3833at2759"/>
<dbReference type="Proteomes" id="UP000007305">
    <property type="component" value="Chromosome 5"/>
</dbReference>
<dbReference type="ExpressionAtlas" id="B4FTR7">
    <property type="expression patterns" value="baseline and differential"/>
</dbReference>
<dbReference type="GO" id="GO:0009507">
    <property type="term" value="C:chloroplast"/>
    <property type="evidence" value="ECO:0007669"/>
    <property type="project" value="UniProtKB-SubCell"/>
</dbReference>
<dbReference type="GO" id="GO:0004435">
    <property type="term" value="F:phosphatidylinositol-4,5-bisphosphate phospholipase C activity"/>
    <property type="evidence" value="ECO:0007669"/>
    <property type="project" value="InterPro"/>
</dbReference>
<dbReference type="GO" id="GO:0003723">
    <property type="term" value="F:RNA binding"/>
    <property type="evidence" value="ECO:0007669"/>
    <property type="project" value="InterPro"/>
</dbReference>
<dbReference type="GO" id="GO:0009658">
    <property type="term" value="P:chloroplast organization"/>
    <property type="evidence" value="ECO:0000315"/>
    <property type="project" value="UniProtKB"/>
</dbReference>
<dbReference type="GO" id="GO:0035556">
    <property type="term" value="P:intracellular signal transduction"/>
    <property type="evidence" value="ECO:0007669"/>
    <property type="project" value="InterPro"/>
</dbReference>
<dbReference type="GO" id="GO:0006629">
    <property type="term" value="P:lipid metabolic process"/>
    <property type="evidence" value="ECO:0007669"/>
    <property type="project" value="InterPro"/>
</dbReference>
<dbReference type="GO" id="GO:0048564">
    <property type="term" value="P:photosystem I assembly"/>
    <property type="evidence" value="ECO:0000315"/>
    <property type="project" value="UniProtKB"/>
</dbReference>
<dbReference type="InterPro" id="IPR001711">
    <property type="entry name" value="PLipase_C_Pinositol-sp_Y"/>
</dbReference>
<dbReference type="InterPro" id="IPR009472">
    <property type="entry name" value="Tab2-like"/>
</dbReference>
<dbReference type="InterPro" id="IPR046761">
    <property type="entry name" value="Tab2-like_C"/>
</dbReference>
<dbReference type="InterPro" id="IPR046760">
    <property type="entry name" value="Tab2-like_N"/>
</dbReference>
<dbReference type="PANTHER" id="PTHR34556">
    <property type="match status" value="1"/>
</dbReference>
<dbReference type="PANTHER" id="PTHR34556:SF2">
    <property type="entry name" value="PROTEIN TAB2 HOMOLOG, CHLOROPLASTIC"/>
    <property type="match status" value="1"/>
</dbReference>
<dbReference type="Pfam" id="PF20429">
    <property type="entry name" value="Tab2-like_C"/>
    <property type="match status" value="1"/>
</dbReference>
<dbReference type="Pfam" id="PF06485">
    <property type="entry name" value="Tab2-like_N"/>
    <property type="match status" value="1"/>
</dbReference>
<feature type="transit peptide" description="Chloroplast" evidence="1">
    <location>
        <begin position="1"/>
        <end position="69"/>
    </location>
</feature>
<feature type="chain" id="PRO_0000441332" description="Protein TAB2 homolog, chloroplastic">
    <location>
        <begin position="70"/>
        <end position="390"/>
    </location>
</feature>
<feature type="region of interest" description="Disordered" evidence="2">
    <location>
        <begin position="16"/>
        <end position="85"/>
    </location>
</feature>
<feature type="compositionally biased region" description="Low complexity" evidence="2">
    <location>
        <begin position="61"/>
        <end position="75"/>
    </location>
</feature>
<proteinExistence type="evidence at transcript level"/>
<protein>
    <recommendedName>
        <fullName evidence="5">Protein TAB2 homolog, chloroplastic</fullName>
        <shortName evidence="4">Zm-TAB2</shortName>
    </recommendedName>
</protein>
<sequence>MTTATAIVAGHGLALRRSLPLPNPPGRATTSVSLSARPVTPARRMIVPASPSPRSPRRCRSISSESSTEASAAADIADEEVEAENKVDPQAEVCYLDPDVDPESIREWELDFCSRPILDARGKKVWELVVCDATLSLQFTRYFPNNAINSVTLRDALASVSEALGVPMPDRVRFFRSQMQTIITRACGDLGVKAVPSRRCVSLLLWLEERYEVVYSRHPGFQAGTRPLLALDNPFPTTLPENLFGDKWAFVQLPFSAVREEVESLERRYAFGAGLDLELLGFELDDTTLVPGVAVESSRAKPLAAWMNGLEICAMEADTGRASLILSAGVSTRYVYSGYQKTAASTQEAEAWEAAKKACGGLHFLAIQENLNSDGCVGFWLLLDLPPPPV</sequence>